<dbReference type="EC" id="2.1.2.11" evidence="1"/>
<dbReference type="EMBL" id="CP001063">
    <property type="protein sequence ID" value="ACD09937.1"/>
    <property type="molecule type" value="Genomic_DNA"/>
</dbReference>
<dbReference type="RefSeq" id="WP_000805451.1">
    <property type="nucleotide sequence ID" value="NC_010658.1"/>
</dbReference>
<dbReference type="SMR" id="B2U2Y1"/>
<dbReference type="STRING" id="344609.SbBS512_E0127"/>
<dbReference type="KEGG" id="sbc:SbBS512_E0127"/>
<dbReference type="HOGENOM" id="CLU_036645_1_0_6"/>
<dbReference type="UniPathway" id="UPA00028">
    <property type="reaction ID" value="UER00003"/>
</dbReference>
<dbReference type="Proteomes" id="UP000001030">
    <property type="component" value="Chromosome"/>
</dbReference>
<dbReference type="GO" id="GO:0005737">
    <property type="term" value="C:cytoplasm"/>
    <property type="evidence" value="ECO:0007669"/>
    <property type="project" value="UniProtKB-SubCell"/>
</dbReference>
<dbReference type="GO" id="GO:0003864">
    <property type="term" value="F:3-methyl-2-oxobutanoate hydroxymethyltransferase activity"/>
    <property type="evidence" value="ECO:0007669"/>
    <property type="project" value="UniProtKB-UniRule"/>
</dbReference>
<dbReference type="GO" id="GO:0000287">
    <property type="term" value="F:magnesium ion binding"/>
    <property type="evidence" value="ECO:0007669"/>
    <property type="project" value="TreeGrafter"/>
</dbReference>
<dbReference type="GO" id="GO:0015940">
    <property type="term" value="P:pantothenate biosynthetic process"/>
    <property type="evidence" value="ECO:0007669"/>
    <property type="project" value="UniProtKB-UniRule"/>
</dbReference>
<dbReference type="CDD" id="cd06557">
    <property type="entry name" value="KPHMT-like"/>
    <property type="match status" value="1"/>
</dbReference>
<dbReference type="FunFam" id="3.20.20.60:FF:000003">
    <property type="entry name" value="3-methyl-2-oxobutanoate hydroxymethyltransferase"/>
    <property type="match status" value="1"/>
</dbReference>
<dbReference type="Gene3D" id="3.20.20.60">
    <property type="entry name" value="Phosphoenolpyruvate-binding domains"/>
    <property type="match status" value="1"/>
</dbReference>
<dbReference type="HAMAP" id="MF_00156">
    <property type="entry name" value="PanB"/>
    <property type="match status" value="1"/>
</dbReference>
<dbReference type="InterPro" id="IPR003700">
    <property type="entry name" value="Pantoate_hydroxy_MeTrfase"/>
</dbReference>
<dbReference type="InterPro" id="IPR015813">
    <property type="entry name" value="Pyrv/PenolPyrv_kinase-like_dom"/>
</dbReference>
<dbReference type="InterPro" id="IPR040442">
    <property type="entry name" value="Pyrv_kinase-like_dom_sf"/>
</dbReference>
<dbReference type="NCBIfam" id="TIGR00222">
    <property type="entry name" value="panB"/>
    <property type="match status" value="1"/>
</dbReference>
<dbReference type="NCBIfam" id="NF001452">
    <property type="entry name" value="PRK00311.1"/>
    <property type="match status" value="1"/>
</dbReference>
<dbReference type="PANTHER" id="PTHR20881">
    <property type="entry name" value="3-METHYL-2-OXOBUTANOATE HYDROXYMETHYLTRANSFERASE"/>
    <property type="match status" value="1"/>
</dbReference>
<dbReference type="PANTHER" id="PTHR20881:SF0">
    <property type="entry name" value="3-METHYL-2-OXOBUTANOATE HYDROXYMETHYLTRANSFERASE"/>
    <property type="match status" value="1"/>
</dbReference>
<dbReference type="Pfam" id="PF02548">
    <property type="entry name" value="Pantoate_transf"/>
    <property type="match status" value="1"/>
</dbReference>
<dbReference type="PIRSF" id="PIRSF000388">
    <property type="entry name" value="Pantoate_hydroxy_MeTrfase"/>
    <property type="match status" value="1"/>
</dbReference>
<dbReference type="SUPFAM" id="SSF51621">
    <property type="entry name" value="Phosphoenolpyruvate/pyruvate domain"/>
    <property type="match status" value="1"/>
</dbReference>
<evidence type="ECO:0000255" key="1">
    <source>
        <dbReference type="HAMAP-Rule" id="MF_00156"/>
    </source>
</evidence>
<accession>B2U2Y1</accession>
<organism>
    <name type="scientific">Shigella boydii serotype 18 (strain CDC 3083-94 / BS512)</name>
    <dbReference type="NCBI Taxonomy" id="344609"/>
    <lineage>
        <taxon>Bacteria</taxon>
        <taxon>Pseudomonadati</taxon>
        <taxon>Pseudomonadota</taxon>
        <taxon>Gammaproteobacteria</taxon>
        <taxon>Enterobacterales</taxon>
        <taxon>Enterobacteriaceae</taxon>
        <taxon>Shigella</taxon>
    </lineage>
</organism>
<gene>
    <name evidence="1" type="primary">panB</name>
    <name type="ordered locus">SbBS512_E0127</name>
</gene>
<sequence length="264" mass="28137">MKPTTIASLQKCKQDKKRFATITAYDYSFAKLFADEGLNVMLVGDSLGMTVQGHDSTLPVTVADIAYHTASVRRGAPNCLLLADLPFMAYATPEQAFENAATVMRAGANMVKIEGGEWLVETVKMLTERAVPVCGHLGLTPQSVNIFGGYKVQGRGDEAGDQLLSDALALEAAGAQLLVLECVPVELAKRITEALAIPVIGIGAGNVTDGQILVMHDAFGITGGHIPKFAKNFLAETGDIRAAVRQYMAEVESGVYPGEEHSFH</sequence>
<comment type="function">
    <text evidence="1">Catalyzes the reversible reaction in which hydroxymethyl group from 5,10-methylenetetrahydrofolate is transferred onto alpha-ketoisovalerate to form ketopantoate.</text>
</comment>
<comment type="catalytic activity">
    <reaction evidence="1">
        <text>3-methyl-2-oxobutanoate + (6R)-5,10-methylene-5,6,7,8-tetrahydrofolate + H2O = 2-dehydropantoate + (6S)-5,6,7,8-tetrahydrofolate</text>
        <dbReference type="Rhea" id="RHEA:11824"/>
        <dbReference type="ChEBI" id="CHEBI:11561"/>
        <dbReference type="ChEBI" id="CHEBI:11851"/>
        <dbReference type="ChEBI" id="CHEBI:15377"/>
        <dbReference type="ChEBI" id="CHEBI:15636"/>
        <dbReference type="ChEBI" id="CHEBI:57453"/>
        <dbReference type="EC" id="2.1.2.11"/>
    </reaction>
</comment>
<comment type="cofactor">
    <cofactor evidence="1">
        <name>Mg(2+)</name>
        <dbReference type="ChEBI" id="CHEBI:18420"/>
    </cofactor>
    <text evidence="1">Binds 1 Mg(2+) ion per subunit.</text>
</comment>
<comment type="pathway">
    <text evidence="1">Cofactor biosynthesis; (R)-pantothenate biosynthesis; (R)-pantoate from 3-methyl-2-oxobutanoate: step 1/2.</text>
</comment>
<comment type="subunit">
    <text evidence="1">Homodecamer; pentamer of dimers.</text>
</comment>
<comment type="subcellular location">
    <subcellularLocation>
        <location evidence="1">Cytoplasm</location>
    </subcellularLocation>
</comment>
<comment type="similarity">
    <text evidence="1">Belongs to the PanB family.</text>
</comment>
<proteinExistence type="inferred from homology"/>
<name>PANB_SHIB3</name>
<protein>
    <recommendedName>
        <fullName evidence="1">3-methyl-2-oxobutanoate hydroxymethyltransferase</fullName>
        <ecNumber evidence="1">2.1.2.11</ecNumber>
    </recommendedName>
    <alternativeName>
        <fullName evidence="1">Ketopantoate hydroxymethyltransferase</fullName>
        <shortName evidence="1">KPHMT</shortName>
    </alternativeName>
</protein>
<feature type="chain" id="PRO_1000097008" description="3-methyl-2-oxobutanoate hydroxymethyltransferase">
    <location>
        <begin position="1"/>
        <end position="264"/>
    </location>
</feature>
<feature type="active site" description="Proton acceptor" evidence="1">
    <location>
        <position position="181"/>
    </location>
</feature>
<feature type="binding site" evidence="1">
    <location>
        <begin position="45"/>
        <end position="46"/>
    </location>
    <ligand>
        <name>3-methyl-2-oxobutanoate</name>
        <dbReference type="ChEBI" id="CHEBI:11851"/>
    </ligand>
</feature>
<feature type="binding site" evidence="1">
    <location>
        <position position="45"/>
    </location>
    <ligand>
        <name>Mg(2+)</name>
        <dbReference type="ChEBI" id="CHEBI:18420"/>
    </ligand>
</feature>
<feature type="binding site" evidence="1">
    <location>
        <position position="84"/>
    </location>
    <ligand>
        <name>3-methyl-2-oxobutanoate</name>
        <dbReference type="ChEBI" id="CHEBI:11851"/>
    </ligand>
</feature>
<feature type="binding site" evidence="1">
    <location>
        <position position="84"/>
    </location>
    <ligand>
        <name>Mg(2+)</name>
        <dbReference type="ChEBI" id="CHEBI:18420"/>
    </ligand>
</feature>
<feature type="binding site" evidence="1">
    <location>
        <position position="112"/>
    </location>
    <ligand>
        <name>3-methyl-2-oxobutanoate</name>
        <dbReference type="ChEBI" id="CHEBI:11851"/>
    </ligand>
</feature>
<feature type="binding site" evidence="1">
    <location>
        <position position="114"/>
    </location>
    <ligand>
        <name>Mg(2+)</name>
        <dbReference type="ChEBI" id="CHEBI:18420"/>
    </ligand>
</feature>
<keyword id="KW-0963">Cytoplasm</keyword>
<keyword id="KW-0460">Magnesium</keyword>
<keyword id="KW-0479">Metal-binding</keyword>
<keyword id="KW-0566">Pantothenate biosynthesis</keyword>
<keyword id="KW-1185">Reference proteome</keyword>
<keyword id="KW-0808">Transferase</keyword>
<reference key="1">
    <citation type="submission" date="2008-05" db="EMBL/GenBank/DDBJ databases">
        <title>Complete sequence of Shigella boydii serotype 18 strain BS512.</title>
        <authorList>
            <person name="Rasko D.A."/>
            <person name="Rosovitz M."/>
            <person name="Maurelli A.T."/>
            <person name="Myers G."/>
            <person name="Seshadri R."/>
            <person name="Cer R."/>
            <person name="Jiang L."/>
            <person name="Ravel J."/>
            <person name="Sebastian Y."/>
        </authorList>
    </citation>
    <scope>NUCLEOTIDE SEQUENCE [LARGE SCALE GENOMIC DNA]</scope>
    <source>
        <strain>CDC 3083-94 / BS512</strain>
    </source>
</reference>